<accession>P28238</accession>
<accession>Q8QFW8</accession>
<sequence>MRELRSSSFWRAILAEFLGSLLYTLLGLGASLRWAPGPHGVLGSALAFGLAQATLVQALGHVSGGHINPAITLAFLLASQLSLPRALGYLLAQLLGALAGAGVLYGVTPAAVRGTLGLSALHPSVGPGQGTVVELLLTAQFILCVFASFDDRHDGRPGSAALPVGFSLALGHLFGIPFTGAGMNPARSFAPAVITRNFTNHWVFWAGPLLGAALAALLYELALCPRARSMAERLAVLRGEPPAAAPPPEPPAEPLELKTQGL</sequence>
<dbReference type="EMBL" id="AY078179">
    <property type="protein sequence ID" value="AAL82573.1"/>
    <property type="molecule type" value="mRNA"/>
</dbReference>
<dbReference type="PIR" id="A37203">
    <property type="entry name" value="A37203"/>
</dbReference>
<dbReference type="RefSeq" id="NP_989597.1">
    <property type="nucleotide sequence ID" value="NM_204266.2"/>
</dbReference>
<dbReference type="SMR" id="P28238"/>
<dbReference type="FunCoup" id="P28238">
    <property type="interactions" value="173"/>
</dbReference>
<dbReference type="IntAct" id="P28238">
    <property type="interactions" value="1"/>
</dbReference>
<dbReference type="STRING" id="9031.ENSGALP00000049696"/>
<dbReference type="GlyGen" id="P28238">
    <property type="glycosylation" value="1 site"/>
</dbReference>
<dbReference type="Ensembl" id="ENSGALT00010061091.1">
    <property type="protein sequence ID" value="ENSGALP00010037800.1"/>
    <property type="gene ID" value="ENSGALG00010025019.1"/>
</dbReference>
<dbReference type="GeneID" id="374124"/>
<dbReference type="KEGG" id="gga:374124"/>
<dbReference type="CTD" id="4284"/>
<dbReference type="VEuPathDB" id="HostDB:geneid_374124"/>
<dbReference type="GeneTree" id="ENSGT00940000156260"/>
<dbReference type="InParanoid" id="P28238"/>
<dbReference type="OMA" id="LALNTMH"/>
<dbReference type="OrthoDB" id="3222at2759"/>
<dbReference type="PhylomeDB" id="P28238"/>
<dbReference type="Reactome" id="R-GGA-432047">
    <property type="pathway name" value="Passive transport by Aquaporins"/>
</dbReference>
<dbReference type="PRO" id="PR:P28238"/>
<dbReference type="Proteomes" id="UP000000539">
    <property type="component" value="Chromosome 34"/>
</dbReference>
<dbReference type="GO" id="GO:0070161">
    <property type="term" value="C:anchoring junction"/>
    <property type="evidence" value="ECO:0007669"/>
    <property type="project" value="UniProtKB-SubCell"/>
</dbReference>
<dbReference type="GO" id="GO:0016324">
    <property type="term" value="C:apical plasma membrane"/>
    <property type="evidence" value="ECO:0000318"/>
    <property type="project" value="GO_Central"/>
</dbReference>
<dbReference type="GO" id="GO:0005886">
    <property type="term" value="C:plasma membrane"/>
    <property type="evidence" value="ECO:0000250"/>
    <property type="project" value="UniProtKB"/>
</dbReference>
<dbReference type="GO" id="GO:0098631">
    <property type="term" value="F:cell adhesion mediator activity"/>
    <property type="evidence" value="ECO:0000250"/>
    <property type="project" value="UniProtKB"/>
</dbReference>
<dbReference type="GO" id="GO:0005212">
    <property type="term" value="F:structural constituent of eye lens"/>
    <property type="evidence" value="ECO:0007669"/>
    <property type="project" value="UniProtKB-KW"/>
</dbReference>
<dbReference type="GO" id="GO:0015250">
    <property type="term" value="F:water channel activity"/>
    <property type="evidence" value="ECO:0000250"/>
    <property type="project" value="UniProtKB"/>
</dbReference>
<dbReference type="GO" id="GO:1990349">
    <property type="term" value="P:gap junction-mediated intercellular transport"/>
    <property type="evidence" value="ECO:0007669"/>
    <property type="project" value="Ensembl"/>
</dbReference>
<dbReference type="GO" id="GO:0034109">
    <property type="term" value="P:homotypic cell-cell adhesion"/>
    <property type="evidence" value="ECO:0000250"/>
    <property type="project" value="UniProtKB"/>
</dbReference>
<dbReference type="GO" id="GO:0002088">
    <property type="term" value="P:lens development in camera-type eye"/>
    <property type="evidence" value="ECO:0007669"/>
    <property type="project" value="Ensembl"/>
</dbReference>
<dbReference type="GO" id="GO:0036438">
    <property type="term" value="P:maintenance of lens transparency"/>
    <property type="evidence" value="ECO:0000250"/>
    <property type="project" value="UniProtKB"/>
</dbReference>
<dbReference type="GO" id="GO:0007601">
    <property type="term" value="P:visual perception"/>
    <property type="evidence" value="ECO:0007669"/>
    <property type="project" value="Ensembl"/>
</dbReference>
<dbReference type="GO" id="GO:0006833">
    <property type="term" value="P:water transport"/>
    <property type="evidence" value="ECO:0000250"/>
    <property type="project" value="UniProtKB"/>
</dbReference>
<dbReference type="FunFam" id="1.20.1080.10:FF:000003">
    <property type="entry name" value="Lens fiber major intrinsic"/>
    <property type="match status" value="1"/>
</dbReference>
<dbReference type="Gene3D" id="1.20.1080.10">
    <property type="entry name" value="Glycerol uptake facilitator protein"/>
    <property type="match status" value="1"/>
</dbReference>
<dbReference type="InterPro" id="IPR023271">
    <property type="entry name" value="Aquaporin-like"/>
</dbReference>
<dbReference type="InterPro" id="IPR023254">
    <property type="entry name" value="Aquaporin_6"/>
</dbReference>
<dbReference type="InterPro" id="IPR034294">
    <property type="entry name" value="Aquaporin_transptr"/>
</dbReference>
<dbReference type="InterPro" id="IPR000425">
    <property type="entry name" value="MIP"/>
</dbReference>
<dbReference type="InterPro" id="IPR022357">
    <property type="entry name" value="MIP_CS"/>
</dbReference>
<dbReference type="NCBIfam" id="TIGR00861">
    <property type="entry name" value="MIP"/>
    <property type="match status" value="1"/>
</dbReference>
<dbReference type="PANTHER" id="PTHR19139">
    <property type="entry name" value="AQUAPORIN TRANSPORTER"/>
    <property type="match status" value="1"/>
</dbReference>
<dbReference type="PANTHER" id="PTHR19139:SF39">
    <property type="entry name" value="LENS FIBER MAJOR INTRINSIC PROTEIN"/>
    <property type="match status" value="1"/>
</dbReference>
<dbReference type="Pfam" id="PF00230">
    <property type="entry name" value="MIP"/>
    <property type="match status" value="1"/>
</dbReference>
<dbReference type="PRINTS" id="PR02018">
    <property type="entry name" value="AQUAPORIN6"/>
</dbReference>
<dbReference type="PRINTS" id="PR00783">
    <property type="entry name" value="MINTRINSICP"/>
</dbReference>
<dbReference type="SUPFAM" id="SSF81338">
    <property type="entry name" value="Aquaporin-like"/>
    <property type="match status" value="1"/>
</dbReference>
<dbReference type="PROSITE" id="PS00221">
    <property type="entry name" value="MIP"/>
    <property type="match status" value="1"/>
</dbReference>
<keyword id="KW-0965">Cell junction</keyword>
<keyword id="KW-1003">Cell membrane</keyword>
<keyword id="KW-0273">Eye lens protein</keyword>
<keyword id="KW-0472">Membrane</keyword>
<keyword id="KW-1185">Reference proteome</keyword>
<keyword id="KW-0812">Transmembrane</keyword>
<keyword id="KW-1133">Transmembrane helix</keyword>
<keyword id="KW-0813">Transport</keyword>
<protein>
    <recommendedName>
        <fullName evidence="9">Lens fiber major intrinsic protein</fullName>
    </recommendedName>
    <alternativeName>
        <fullName evidence="6">Aquaporin-0</fullName>
        <shortName evidence="6">AQP0</shortName>
    </alternativeName>
    <alternativeName>
        <fullName evidence="2">MIP26</fullName>
        <shortName evidence="2">MP26</shortName>
    </alternativeName>
</protein>
<name>MIP_CHICK</name>
<gene>
    <name evidence="7" type="primary">MIP</name>
</gene>
<proteinExistence type="evidence at protein level"/>
<organism>
    <name type="scientific">Gallus gallus</name>
    <name type="common">Chicken</name>
    <dbReference type="NCBI Taxonomy" id="9031"/>
    <lineage>
        <taxon>Eukaryota</taxon>
        <taxon>Metazoa</taxon>
        <taxon>Chordata</taxon>
        <taxon>Craniata</taxon>
        <taxon>Vertebrata</taxon>
        <taxon>Euteleostomi</taxon>
        <taxon>Archelosauria</taxon>
        <taxon>Archosauria</taxon>
        <taxon>Dinosauria</taxon>
        <taxon>Saurischia</taxon>
        <taxon>Theropoda</taxon>
        <taxon>Coelurosauria</taxon>
        <taxon>Aves</taxon>
        <taxon>Neognathae</taxon>
        <taxon>Galloanserae</taxon>
        <taxon>Galliformes</taxon>
        <taxon>Phasianidae</taxon>
        <taxon>Phasianinae</taxon>
        <taxon>Gallus</taxon>
    </lineage>
</organism>
<comment type="function">
    <text evidence="2">Aquaporins form homotetrameric transmembrane channels, with each monomer independently mediating water transport across the plasma membrane along its osmotic gradient. Specifically expressed in lens fiber cells, this aquaporin is crucial for maintaining lens water homeostasis and transparency. Beyond water permeability, it also acts as a cell-to-cell adhesion molecule, forming thin junctions between lens fiber cells that are essential for maintaining the ordered structure and transparency of the lens.</text>
</comment>
<comment type="catalytic activity">
    <reaction evidence="2">
        <text>H2O(in) = H2O(out)</text>
        <dbReference type="Rhea" id="RHEA:29667"/>
        <dbReference type="ChEBI" id="CHEBI:15377"/>
    </reaction>
</comment>
<comment type="activity regulation">
    <text evidence="2">The water channel activity is inhibited by calcium through calmodulin/CALM.</text>
</comment>
<comment type="subunit">
    <text evidence="1 5">Homotetramer; each monomer provides an independent water pore. Two homotetramers on opposing membranes can dimerize, forming a cell-cell junction. Interacts with CALM; the calcium-calmodulin/CALM complex interacts with the cytoplasmic domains of two aquaporins, leading to channel closure (By similarity). During early stages of lens development, interacts through its C-terminal region with Cx56 and GJA8/Cx45.6 (PubMed:14762116).</text>
</comment>
<comment type="interaction">
    <interactant intactId="EBI-867385">
        <id>P28238</id>
    </interactant>
    <interactant intactId="EBI-867402">
        <id>P36381</id>
        <label>GJA8</label>
    </interactant>
    <organismsDiffer>false</organismsDiffer>
    <experiments>11</experiments>
</comment>
<comment type="subcellular location">
    <subcellularLocation>
        <location evidence="2">Cell membrane</location>
        <topology evidence="3">Multi-pass membrane protein</topology>
    </subcellularLocation>
    <subcellularLocation>
        <location evidence="3">Cell junction</location>
    </subcellularLocation>
    <text evidence="3">Localizes to thin cell-cell junctions in lens fiber cells.</text>
</comment>
<comment type="tissue specificity">
    <text evidence="5">Major component of lens fiber gap junctions.</text>
</comment>
<comment type="domain">
    <text evidence="3">Aquaporins contain two tandem repeats each containing three membrane-spanning domains and a pore-forming loop with the signature motif Asn-Pro-Ala (NPA).</text>
</comment>
<comment type="similarity">
    <text evidence="8">Belongs to the MIP/aquaporin (TC 1.A.8) family.</text>
</comment>
<evidence type="ECO:0000250" key="1">
    <source>
        <dbReference type="UniProtKB" id="P06624"/>
    </source>
</evidence>
<evidence type="ECO:0000250" key="2">
    <source>
        <dbReference type="UniProtKB" id="P30301"/>
    </source>
</evidence>
<evidence type="ECO:0000250" key="3">
    <source>
        <dbReference type="UniProtKB" id="Q6J8I9"/>
    </source>
</evidence>
<evidence type="ECO:0000256" key="4">
    <source>
        <dbReference type="SAM" id="MobiDB-lite"/>
    </source>
</evidence>
<evidence type="ECO:0000269" key="5">
    <source>
    </source>
</evidence>
<evidence type="ECO:0000303" key="6">
    <source>
    </source>
</evidence>
<evidence type="ECO:0000303" key="7">
    <source>
    </source>
</evidence>
<evidence type="ECO:0000305" key="8"/>
<evidence type="ECO:0000305" key="9">
    <source>
    </source>
</evidence>
<feature type="chain" id="PRO_0000063916" description="Lens fiber major intrinsic protein">
    <location>
        <begin position="1"/>
        <end position="262"/>
    </location>
</feature>
<feature type="topological domain" description="Cytoplasmic" evidence="1">
    <location>
        <begin position="1"/>
        <end position="9"/>
    </location>
</feature>
<feature type="transmembrane region" description="Helical; Name=1" evidence="1">
    <location>
        <begin position="10"/>
        <end position="29"/>
    </location>
</feature>
<feature type="topological domain" description="Extracellular" evidence="1">
    <location>
        <begin position="30"/>
        <end position="41"/>
    </location>
</feature>
<feature type="transmembrane region" description="Helical; Name=2" evidence="1">
    <location>
        <begin position="42"/>
        <end position="59"/>
    </location>
</feature>
<feature type="topological domain" description="Cytoplasmic" evidence="1">
    <location>
        <begin position="60"/>
        <end position="61"/>
    </location>
</feature>
<feature type="intramembrane region" description="Discontinuously helical" evidence="1">
    <location>
        <begin position="62"/>
        <end position="77"/>
    </location>
</feature>
<feature type="topological domain" description="Cytoplasmic" evidence="1">
    <location>
        <begin position="78"/>
        <end position="82"/>
    </location>
</feature>
<feature type="transmembrane region" description="Helical; Name=3" evidence="1">
    <location>
        <begin position="83"/>
        <end position="106"/>
    </location>
</feature>
<feature type="topological domain" description="Extracellular" evidence="1">
    <location>
        <begin position="107"/>
        <end position="127"/>
    </location>
</feature>
<feature type="transmembrane region" description="Helical; Name=4" evidence="1">
    <location>
        <begin position="128"/>
        <end position="148"/>
    </location>
</feature>
<feature type="topological domain" description="Cytoplasmic" evidence="1">
    <location>
        <begin position="149"/>
        <end position="156"/>
    </location>
</feature>
<feature type="transmembrane region" description="Helical; Name=5" evidence="1">
    <location>
        <begin position="157"/>
        <end position="175"/>
    </location>
</feature>
<feature type="topological domain" description="Extracellular" evidence="1">
    <location>
        <begin position="176"/>
        <end position="178"/>
    </location>
</feature>
<feature type="intramembrane region" description="Discontinuously helical" evidence="1">
    <location>
        <begin position="179"/>
        <end position="193"/>
    </location>
</feature>
<feature type="topological domain" description="Extracellular" evidence="1">
    <location>
        <begin position="194"/>
        <end position="200"/>
    </location>
</feature>
<feature type="transmembrane region" description="Helical; Name=6" evidence="1">
    <location>
        <begin position="201"/>
        <end position="222"/>
    </location>
</feature>
<feature type="topological domain" description="Cytoplasmic" evidence="1">
    <location>
        <begin position="223"/>
        <end position="262"/>
    </location>
</feature>
<feature type="region of interest" description="Interaction with CALM" evidence="1">
    <location>
        <begin position="227"/>
        <end position="237"/>
    </location>
</feature>
<feature type="region of interest" description="Disordered" evidence="4">
    <location>
        <begin position="240"/>
        <end position="262"/>
    </location>
</feature>
<feature type="short sequence motif" description="NPA 1" evidence="1">
    <location>
        <begin position="68"/>
        <end position="70"/>
    </location>
</feature>
<feature type="short sequence motif" description="NPA 2" evidence="1">
    <location>
        <begin position="184"/>
        <end position="186"/>
    </location>
</feature>
<feature type="compositionally biased region" description="Pro residues" evidence="4">
    <location>
        <begin position="243"/>
        <end position="253"/>
    </location>
</feature>
<reference key="1">
    <citation type="journal article" date="2004" name="J. Cell Sci.">
        <title>Interaction of major intrinsic protein (aquaporin-0) with fiber connexins in lens development.</title>
        <authorList>
            <person name="Yu X.S."/>
            <person name="Jiang J.X."/>
        </authorList>
    </citation>
    <scope>NUCLEOTIDE SEQUENCE [MRNA]</scope>
    <scope>TISSUE SPECIFICITY</scope>
    <scope>INTERACTION WITH CX56 AND GJA8</scope>
    <source>
        <tissue>Embryonic lens</tissue>
    </source>
</reference>
<reference key="2">
    <citation type="journal article" date="1990" name="Exp. Eye Res.">
        <title>Partial amino acid sequence of the major intrinsic protein (MIP) of the chicken lens deduced from the nucleotide sequence of a cDNA clone.</title>
        <authorList>
            <person name="Kodama R."/>
            <person name="Agata K."/>
            <person name="Mochii M."/>
            <person name="Eguchi G."/>
        </authorList>
    </citation>
    <scope>NUCLEOTIDE SEQUENCE [MRNA] OF 151-262</scope>
</reference>